<reference key="1">
    <citation type="submission" date="1992-07" db="EMBL/GenBank/DDBJ databases">
        <authorList>
            <person name="Nishimura K."/>
            <person name="Inokuchi H."/>
        </authorList>
    </citation>
    <scope>NUCLEOTIDE SEQUENCE [GENOMIC DNA]</scope>
    <source>
        <strain>K12</strain>
    </source>
</reference>
<reference key="2">
    <citation type="journal article" date="1993" name="Nucleic Acids Res.">
        <title>Analysis of the Escherichia coli genome. IV. DNA sequence of the region from 89.2 to 92.8 minutes.</title>
        <authorList>
            <person name="Blattner F.R."/>
            <person name="Burland V.D."/>
            <person name="Plunkett G. III"/>
            <person name="Sofia H.J."/>
            <person name="Daniels D.L."/>
        </authorList>
    </citation>
    <scope>NUCLEOTIDE SEQUENCE [LARGE SCALE GENOMIC DNA]</scope>
    <source>
        <strain>K12 / MG1655 / ATCC 47076</strain>
    </source>
</reference>
<reference key="3">
    <citation type="journal article" date="1997" name="Science">
        <title>The complete genome sequence of Escherichia coli K-12.</title>
        <authorList>
            <person name="Blattner F.R."/>
            <person name="Plunkett G. III"/>
            <person name="Bloch C.A."/>
            <person name="Perna N.T."/>
            <person name="Burland V."/>
            <person name="Riley M."/>
            <person name="Collado-Vides J."/>
            <person name="Glasner J.D."/>
            <person name="Rode C.K."/>
            <person name="Mayhew G.F."/>
            <person name="Gregor J."/>
            <person name="Davis N.W."/>
            <person name="Kirkpatrick H.A."/>
            <person name="Goeden M.A."/>
            <person name="Rose D.J."/>
            <person name="Mau B."/>
            <person name="Shao Y."/>
        </authorList>
    </citation>
    <scope>NUCLEOTIDE SEQUENCE [LARGE SCALE GENOMIC DNA]</scope>
    <source>
        <strain>K12 / MG1655 / ATCC 47076</strain>
    </source>
</reference>
<reference key="4">
    <citation type="journal article" date="2006" name="Mol. Syst. Biol.">
        <title>Highly accurate genome sequences of Escherichia coli K-12 strains MG1655 and W3110.</title>
        <authorList>
            <person name="Hayashi K."/>
            <person name="Morooka N."/>
            <person name="Yamamoto Y."/>
            <person name="Fujita K."/>
            <person name="Isono K."/>
            <person name="Choi S."/>
            <person name="Ohtsubo E."/>
            <person name="Baba T."/>
            <person name="Wanner B.L."/>
            <person name="Mori H."/>
            <person name="Horiuchi T."/>
        </authorList>
    </citation>
    <scope>NUCLEOTIDE SEQUENCE [LARGE SCALE GENOMIC DNA]</scope>
    <source>
        <strain>K12 / W3110 / ATCC 27325 / DSM 5911</strain>
    </source>
</reference>
<reference key="5">
    <citation type="unpublished observations" date="1993-06">
        <authorList>
            <person name="Rudd K.E."/>
        </authorList>
    </citation>
    <scope>IDENTIFICATION</scope>
</reference>
<reference key="6">
    <citation type="journal article" date="1998" name="Proc. Natl. Acad. Sci. U.S.A.">
        <title>A stationary phase protein in Escherichia coli with binding activity to the major sigma subunit of RNA polymerase.</title>
        <authorList>
            <person name="Jishage M."/>
            <person name="Ishihama A."/>
        </authorList>
    </citation>
    <scope>FUNCTION</scope>
    <scope>INTERACTION WITH RPOD</scope>
</reference>
<reference key="7">
    <citation type="journal article" date="1999" name="J. Bacteriol.">
        <title>Transcriptional organization and in vivo role of the Escherichia coli rsd gene, encoding the regulator of RNA polymerase sigma D.</title>
        <authorList>
            <person name="Jishage M."/>
            <person name="Ishihama A."/>
        </authorList>
    </citation>
    <scope>FUNCTION</scope>
</reference>
<reference key="8">
    <citation type="journal article" date="2007" name="J. Mol. Biol.">
        <title>Crystal structure of the Escherichia coli regulator of sigma70, Rsd, in complex with sigma70 domain 4.</title>
        <authorList>
            <person name="Patikoglou G.A."/>
            <person name="Westblade L.F."/>
            <person name="Campbell E.A."/>
            <person name="Lamour V."/>
            <person name="Lane W.J."/>
            <person name="Darst S.A."/>
        </authorList>
    </citation>
    <scope>X-RAY CRYSTALLOGRAPHY (2.6 ANGSTROMS) IN COMPLEX WITH RPOD</scope>
    <scope>SUBUNIT</scope>
</reference>
<keyword id="KW-0002">3D-structure</keyword>
<keyword id="KW-0963">Cytoplasm</keyword>
<keyword id="KW-1185">Reference proteome</keyword>
<keyword id="KW-0804">Transcription</keyword>
<keyword id="KW-0805">Transcription regulation</keyword>
<organism>
    <name type="scientific">Escherichia coli (strain K12)</name>
    <dbReference type="NCBI Taxonomy" id="83333"/>
    <lineage>
        <taxon>Bacteria</taxon>
        <taxon>Pseudomonadati</taxon>
        <taxon>Pseudomonadota</taxon>
        <taxon>Gammaproteobacteria</taxon>
        <taxon>Enterobacterales</taxon>
        <taxon>Enterobacteriaceae</taxon>
        <taxon>Escherichia</taxon>
    </lineage>
</organism>
<comment type="function">
    <text evidence="1 2 4">Binds RpoD and negatively regulates RpoD-mediated transcription activation by preventing the interaction between the primary sigma factor RpoD with the catalytic core of the RNA polymerase and with promoter DNA. May be involved in replacement of the RNA polymerase sigma subunit from RpoD to RpoS during the transition from exponential growth to the stationary phase.</text>
</comment>
<comment type="subunit">
    <text evidence="1 3 4">Interacts with RpoD.</text>
</comment>
<comment type="interaction">
    <interactant intactId="EBI-1134364">
        <id>P0AFX4</id>
    </interactant>
    <interactant intactId="EBI-545104">
        <id>P00579</id>
        <label>rpoD</label>
    </interactant>
    <organismsDiffer>false</organismsDiffer>
    <experiments>11</experiments>
</comment>
<comment type="subcellular location">
    <subcellularLocation>
        <location evidence="1">Cytoplasm</location>
    </subcellularLocation>
</comment>
<comment type="similarity">
    <text evidence="1">Belongs to the Rsd/AlgQ family.</text>
</comment>
<comment type="sequence caution" evidence="5">
    <conflict type="frameshift">
        <sequence resource="EMBL" id="D12624"/>
    </conflict>
</comment>
<evidence type="ECO:0000255" key="1">
    <source>
        <dbReference type="HAMAP-Rule" id="MF_01181"/>
    </source>
</evidence>
<evidence type="ECO:0000269" key="2">
    <source>
    </source>
</evidence>
<evidence type="ECO:0000269" key="3">
    <source>
    </source>
</evidence>
<evidence type="ECO:0000269" key="4">
    <source>
    </source>
</evidence>
<evidence type="ECO:0000305" key="5"/>
<evidence type="ECO:0007829" key="6">
    <source>
        <dbReference type="PDB" id="4XWJ"/>
    </source>
</evidence>
<accession>P0AFX4</accession>
<accession>P31690</accession>
<accession>Q2M8T2</accession>
<sequence length="158" mass="18243">MLNQLDNLTERVRGSNKLVDRWLHVRKHLLVAYYNLVGIKPGKESYMRLNEKALDDFCQSLVDYLSAGHFSIYERILHKLEGNGQLARAAKIWPQLEANTQQIMDYYDSSLETAIDHDNYLEFQQVLSDIGEALEARFVLEDKLILLVLDAARVKHPA</sequence>
<dbReference type="EMBL" id="D12624">
    <property type="status" value="NOT_ANNOTATED_CDS"/>
    <property type="molecule type" value="Genomic_DNA"/>
</dbReference>
<dbReference type="EMBL" id="U00006">
    <property type="protein sequence ID" value="AAC43093.1"/>
    <property type="molecule type" value="Genomic_DNA"/>
</dbReference>
<dbReference type="EMBL" id="U00096">
    <property type="protein sequence ID" value="AAC76969.1"/>
    <property type="molecule type" value="Genomic_DNA"/>
</dbReference>
<dbReference type="EMBL" id="AP009048">
    <property type="protein sequence ID" value="BAE77324.1"/>
    <property type="molecule type" value="Genomic_DNA"/>
</dbReference>
<dbReference type="PIR" id="F65206">
    <property type="entry name" value="F65206"/>
</dbReference>
<dbReference type="RefSeq" id="NP_418423.1">
    <property type="nucleotide sequence ID" value="NC_000913.3"/>
</dbReference>
<dbReference type="RefSeq" id="WP_000934302.1">
    <property type="nucleotide sequence ID" value="NZ_STEB01000045.1"/>
</dbReference>
<dbReference type="PDB" id="2P7V">
    <property type="method" value="X-ray"/>
    <property type="resolution" value="2.60 A"/>
    <property type="chains" value="A=1-158"/>
</dbReference>
<dbReference type="PDB" id="4XWJ">
    <property type="method" value="X-ray"/>
    <property type="resolution" value="2.10 A"/>
    <property type="chains" value="A=1-151"/>
</dbReference>
<dbReference type="PDBsum" id="2P7V"/>
<dbReference type="PDBsum" id="4XWJ"/>
<dbReference type="SMR" id="P0AFX4"/>
<dbReference type="BioGRID" id="4259334">
    <property type="interactions" value="9"/>
</dbReference>
<dbReference type="BioGRID" id="852790">
    <property type="interactions" value="3"/>
</dbReference>
<dbReference type="ComplexPortal" id="CPX-4901">
    <property type="entry name" value="rpod-rsd sigma-antisigma complex"/>
</dbReference>
<dbReference type="DIP" id="DIP-10800N"/>
<dbReference type="FunCoup" id="P0AFX4">
    <property type="interactions" value="56"/>
</dbReference>
<dbReference type="IntAct" id="P0AFX4">
    <property type="interactions" value="8"/>
</dbReference>
<dbReference type="STRING" id="511145.b3995"/>
<dbReference type="jPOST" id="P0AFX4"/>
<dbReference type="PaxDb" id="511145-b3995"/>
<dbReference type="EnsemblBacteria" id="AAC76969">
    <property type="protein sequence ID" value="AAC76969"/>
    <property type="gene ID" value="b3995"/>
</dbReference>
<dbReference type="GeneID" id="75205513"/>
<dbReference type="GeneID" id="948496"/>
<dbReference type="KEGG" id="ecj:JW3959"/>
<dbReference type="KEGG" id="eco:b3995"/>
<dbReference type="KEGG" id="ecoc:C3026_21580"/>
<dbReference type="PATRIC" id="fig|1411691.4.peg.2716"/>
<dbReference type="EchoBASE" id="EB1689"/>
<dbReference type="eggNOG" id="COG3160">
    <property type="taxonomic scope" value="Bacteria"/>
</dbReference>
<dbReference type="HOGENOM" id="CLU_142729_0_0_6"/>
<dbReference type="InParanoid" id="P0AFX4"/>
<dbReference type="OMA" id="DVIDHWL"/>
<dbReference type="OrthoDB" id="5567237at2"/>
<dbReference type="PhylomeDB" id="P0AFX4"/>
<dbReference type="BioCyc" id="EcoCyc:EG11738-MONOMER"/>
<dbReference type="BioCyc" id="MetaCyc:EG11738-MONOMER"/>
<dbReference type="EvolutionaryTrace" id="P0AFX4"/>
<dbReference type="PRO" id="PR:P0AFX4"/>
<dbReference type="Proteomes" id="UP000000625">
    <property type="component" value="Chromosome"/>
</dbReference>
<dbReference type="GO" id="GO:0005737">
    <property type="term" value="C:cytoplasm"/>
    <property type="evidence" value="ECO:0007669"/>
    <property type="project" value="UniProtKB-SubCell"/>
</dbReference>
<dbReference type="GO" id="GO:1903865">
    <property type="term" value="C:sigma factor antagonist complex"/>
    <property type="evidence" value="ECO:0000353"/>
    <property type="project" value="ComplexPortal"/>
</dbReference>
<dbReference type="GO" id="GO:0001000">
    <property type="term" value="F:bacterial-type RNA polymerase core enzyme binding"/>
    <property type="evidence" value="ECO:0000314"/>
    <property type="project" value="EcoCyc"/>
</dbReference>
<dbReference type="GO" id="GO:0016989">
    <property type="term" value="F:sigma factor antagonist activity"/>
    <property type="evidence" value="ECO:0000314"/>
    <property type="project" value="EcoCyc"/>
</dbReference>
<dbReference type="GO" id="GO:0045892">
    <property type="term" value="P:negative regulation of DNA-templated transcription"/>
    <property type="evidence" value="ECO:0000303"/>
    <property type="project" value="ComplexPortal"/>
</dbReference>
<dbReference type="GO" id="GO:0030813">
    <property type="term" value="P:positive regulation of nucleotide catabolic process"/>
    <property type="evidence" value="ECO:0000314"/>
    <property type="project" value="EcoCyc"/>
</dbReference>
<dbReference type="GO" id="GO:0015968">
    <property type="term" value="P:stringent response"/>
    <property type="evidence" value="ECO:0000316"/>
    <property type="project" value="EcoCyc"/>
</dbReference>
<dbReference type="FunFam" id="1.20.120.1370:FF:000001">
    <property type="entry name" value="Regulator of sigma D"/>
    <property type="match status" value="1"/>
</dbReference>
<dbReference type="Gene3D" id="1.20.120.1370">
    <property type="entry name" value="Regulator of RNA polymerase sigma(70) subunit, domain 4"/>
    <property type="match status" value="1"/>
</dbReference>
<dbReference type="HAMAP" id="MF_01181">
    <property type="entry name" value="Rsd"/>
    <property type="match status" value="1"/>
</dbReference>
<dbReference type="InterPro" id="IPR038309">
    <property type="entry name" value="Rsd/AlgQ_sf"/>
</dbReference>
<dbReference type="InterPro" id="IPR023785">
    <property type="entry name" value="Sigma70_reg_Rsd"/>
</dbReference>
<dbReference type="InterPro" id="IPR007448">
    <property type="entry name" value="Sigma70_reg_Rsd_AlgQ"/>
</dbReference>
<dbReference type="NCBIfam" id="NF008723">
    <property type="entry name" value="PRK11718.1"/>
    <property type="match status" value="1"/>
</dbReference>
<dbReference type="Pfam" id="PF04353">
    <property type="entry name" value="Rsd_AlgQ"/>
    <property type="match status" value="1"/>
</dbReference>
<dbReference type="PIRSF" id="PIRSF016548">
    <property type="entry name" value="Rsd_AlgQ"/>
    <property type="match status" value="1"/>
</dbReference>
<gene>
    <name evidence="1" type="primary">rsd</name>
    <name type="ordered locus">b3995</name>
    <name type="ordered locus">JW3959</name>
</gene>
<feature type="chain" id="PRO_0000097476" description="Regulator of sigma D">
    <location>
        <begin position="1"/>
        <end position="158"/>
    </location>
</feature>
<feature type="region of interest" description="Interaction with RpoD">
    <location>
        <begin position="59"/>
        <end position="71"/>
    </location>
</feature>
<feature type="region of interest" description="Interaction with RpoD">
    <location>
        <begin position="101"/>
        <end position="108"/>
    </location>
</feature>
<feature type="helix" evidence="6">
    <location>
        <begin position="1"/>
        <end position="12"/>
    </location>
</feature>
<feature type="helix" evidence="6">
    <location>
        <begin position="17"/>
        <end position="37"/>
    </location>
</feature>
<feature type="helix" evidence="6">
    <location>
        <begin position="46"/>
        <end position="49"/>
    </location>
</feature>
<feature type="helix" evidence="6">
    <location>
        <begin position="51"/>
        <end position="70"/>
    </location>
</feature>
<feature type="helix" evidence="6">
    <location>
        <begin position="72"/>
        <end position="79"/>
    </location>
</feature>
<feature type="helix" evidence="6">
    <location>
        <begin position="83"/>
        <end position="108"/>
    </location>
</feature>
<feature type="helix" evidence="6">
    <location>
        <begin position="110"/>
        <end position="117"/>
    </location>
</feature>
<feature type="helix" evidence="6">
    <location>
        <begin position="120"/>
        <end position="150"/>
    </location>
</feature>
<protein>
    <recommendedName>
        <fullName evidence="1">Regulator of sigma D</fullName>
    </recommendedName>
</protein>
<name>RSD_ECOLI</name>
<proteinExistence type="evidence at protein level"/>